<feature type="chain" id="PRO_0000198512" description="Ribonuclease P protein component">
    <location>
        <begin position="1"/>
        <end position="133"/>
    </location>
</feature>
<evidence type="ECO:0000255" key="1">
    <source>
        <dbReference type="HAMAP-Rule" id="MF_00227"/>
    </source>
</evidence>
<dbReference type="EC" id="3.1.26.5" evidence="1"/>
<dbReference type="EMBL" id="X62540">
    <property type="protein sequence ID" value="CAA44415.1"/>
    <property type="molecule type" value="Genomic_DNA"/>
</dbReference>
<dbReference type="PIR" id="JQ1219">
    <property type="entry name" value="JQ1219"/>
</dbReference>
<dbReference type="SMR" id="P0A168"/>
<dbReference type="eggNOG" id="COG0594">
    <property type="taxonomic scope" value="Bacteria"/>
</dbReference>
<dbReference type="GO" id="GO:0030677">
    <property type="term" value="C:ribonuclease P complex"/>
    <property type="evidence" value="ECO:0007669"/>
    <property type="project" value="TreeGrafter"/>
</dbReference>
<dbReference type="GO" id="GO:0042781">
    <property type="term" value="F:3'-tRNA processing endoribonuclease activity"/>
    <property type="evidence" value="ECO:0007669"/>
    <property type="project" value="TreeGrafter"/>
</dbReference>
<dbReference type="GO" id="GO:0004526">
    <property type="term" value="F:ribonuclease P activity"/>
    <property type="evidence" value="ECO:0007669"/>
    <property type="project" value="UniProtKB-UniRule"/>
</dbReference>
<dbReference type="GO" id="GO:0000049">
    <property type="term" value="F:tRNA binding"/>
    <property type="evidence" value="ECO:0007669"/>
    <property type="project" value="UniProtKB-UniRule"/>
</dbReference>
<dbReference type="GO" id="GO:0001682">
    <property type="term" value="P:tRNA 5'-leader removal"/>
    <property type="evidence" value="ECO:0007669"/>
    <property type="project" value="UniProtKB-UniRule"/>
</dbReference>
<dbReference type="Gene3D" id="3.30.230.10">
    <property type="match status" value="1"/>
</dbReference>
<dbReference type="HAMAP" id="MF_00227">
    <property type="entry name" value="RNase_P"/>
    <property type="match status" value="1"/>
</dbReference>
<dbReference type="InterPro" id="IPR020568">
    <property type="entry name" value="Ribosomal_Su5_D2-typ_SF"/>
</dbReference>
<dbReference type="InterPro" id="IPR014721">
    <property type="entry name" value="Ribsml_uS5_D2-typ_fold_subgr"/>
</dbReference>
<dbReference type="InterPro" id="IPR000100">
    <property type="entry name" value="RNase_P"/>
</dbReference>
<dbReference type="InterPro" id="IPR020539">
    <property type="entry name" value="RNase_P_CS"/>
</dbReference>
<dbReference type="NCBIfam" id="TIGR00188">
    <property type="entry name" value="rnpA"/>
    <property type="match status" value="1"/>
</dbReference>
<dbReference type="PANTHER" id="PTHR33992">
    <property type="entry name" value="RIBONUCLEASE P PROTEIN COMPONENT"/>
    <property type="match status" value="1"/>
</dbReference>
<dbReference type="PANTHER" id="PTHR33992:SF1">
    <property type="entry name" value="RIBONUCLEASE P PROTEIN COMPONENT"/>
    <property type="match status" value="1"/>
</dbReference>
<dbReference type="Pfam" id="PF00825">
    <property type="entry name" value="Ribonuclease_P"/>
    <property type="match status" value="1"/>
</dbReference>
<dbReference type="SUPFAM" id="SSF54211">
    <property type="entry name" value="Ribosomal protein S5 domain 2-like"/>
    <property type="match status" value="1"/>
</dbReference>
<dbReference type="PROSITE" id="PS00648">
    <property type="entry name" value="RIBONUCLEASE_P"/>
    <property type="match status" value="1"/>
</dbReference>
<name>RNPA_PSEPU</name>
<protein>
    <recommendedName>
        <fullName evidence="1">Ribonuclease P protein component</fullName>
        <shortName evidence="1">RNase P protein</shortName>
        <shortName evidence="1">RNaseP protein</shortName>
        <ecNumber evidence="1">3.1.26.5</ecNumber>
    </recommendedName>
    <alternativeName>
        <fullName evidence="1">Protein C5</fullName>
    </alternativeName>
</protein>
<organism>
    <name type="scientific">Pseudomonas putida</name>
    <name type="common">Arthrobacter siderocapsulatus</name>
    <dbReference type="NCBI Taxonomy" id="303"/>
    <lineage>
        <taxon>Bacteria</taxon>
        <taxon>Pseudomonadati</taxon>
        <taxon>Pseudomonadota</taxon>
        <taxon>Gammaproteobacteria</taxon>
        <taxon>Pseudomonadales</taxon>
        <taxon>Pseudomonadaceae</taxon>
        <taxon>Pseudomonas</taxon>
    </lineage>
</organism>
<proteinExistence type="inferred from homology"/>
<sequence>MSQDFSREKRLLTPRHFKAVFDSPTGKVPGKNLLILARENGLDHPRLGLVIGKKSVKLAVQRNRLKRLMRDSFRLNQQLLAGLDIVIVARKGLGEIENPELHQHFGKLWKRLARSRPTPAVTANSAGVDSQDA</sequence>
<reference key="1">
    <citation type="journal article" date="1992" name="Mol. Microbiol.">
        <title>Genes and their organization in the replication origin region of the bacterial chromosome.</title>
        <authorList>
            <person name="Ogasawara N."/>
            <person name="Yoshikawa H."/>
        </authorList>
    </citation>
    <scope>NUCLEOTIDE SEQUENCE [GENOMIC DNA]</scope>
    <source>
        <strain>TN2100</strain>
    </source>
</reference>
<comment type="function">
    <text evidence="1">RNaseP catalyzes the removal of the 5'-leader sequence from pre-tRNA to produce the mature 5'-terminus. It can also cleave other RNA substrates such as 4.5S RNA. The protein component plays an auxiliary but essential role in vivo by binding to the 5'-leader sequence and broadening the substrate specificity of the ribozyme.</text>
</comment>
<comment type="catalytic activity">
    <reaction evidence="1">
        <text>Endonucleolytic cleavage of RNA, removing 5'-extranucleotides from tRNA precursor.</text>
        <dbReference type="EC" id="3.1.26.5"/>
    </reaction>
</comment>
<comment type="subunit">
    <text evidence="1">Consists of a catalytic RNA component (M1 or rnpB) and a protein subunit.</text>
</comment>
<comment type="similarity">
    <text evidence="1">Belongs to the RnpA family.</text>
</comment>
<gene>
    <name evidence="1" type="primary">rnpA</name>
</gene>
<keyword id="KW-0255">Endonuclease</keyword>
<keyword id="KW-0378">Hydrolase</keyword>
<keyword id="KW-0540">Nuclease</keyword>
<keyword id="KW-0694">RNA-binding</keyword>
<keyword id="KW-0819">tRNA processing</keyword>
<accession>P0A168</accession>
<accession>P25752</accession>